<accession>Q83L15</accession>
<accession>Q7UCG5</accession>
<proteinExistence type="inferred from homology"/>
<protein>
    <recommendedName>
        <fullName evidence="1">3-hydroxy-5-phosphonooxypentane-2,4-dione thiolase</fullName>
        <ecNumber evidence="1">2.3.1.245</ecNumber>
    </recommendedName>
</protein>
<organism>
    <name type="scientific">Shigella flexneri</name>
    <dbReference type="NCBI Taxonomy" id="623"/>
    <lineage>
        <taxon>Bacteria</taxon>
        <taxon>Pseudomonadati</taxon>
        <taxon>Pseudomonadota</taxon>
        <taxon>Gammaproteobacteria</taxon>
        <taxon>Enterobacterales</taxon>
        <taxon>Enterobacteriaceae</taxon>
        <taxon>Shigella</taxon>
    </lineage>
</organism>
<comment type="function">
    <text evidence="1">Involved in the degradation of phospho-AI-2, thereby terminating induction of the lsr operon and closing the AI-2 signaling cycle. Catalyzes the transfer of an acetyl moiety from 3-hydroxy-5-phosphonooxypentane-2,4-dione to CoA to form glycerone phosphate and acetyl-CoA.</text>
</comment>
<comment type="catalytic activity">
    <reaction evidence="1">
        <text>dihydroxyacetone phosphate + acetyl-CoA = 3-hydroxy-2,4-dioxopentyl phosphate + CoA</text>
        <dbReference type="Rhea" id="RHEA:44736"/>
        <dbReference type="ChEBI" id="CHEBI:57287"/>
        <dbReference type="ChEBI" id="CHEBI:57288"/>
        <dbReference type="ChEBI" id="CHEBI:57642"/>
        <dbReference type="ChEBI" id="CHEBI:84359"/>
        <dbReference type="EC" id="2.3.1.245"/>
    </reaction>
</comment>
<comment type="subunit">
    <text evidence="1">Homodecamer.</text>
</comment>
<comment type="subcellular location">
    <subcellularLocation>
        <location evidence="2">Cytoplasm</location>
    </subcellularLocation>
</comment>
<comment type="similarity">
    <text evidence="2">Belongs to the DeoC/FbaB aldolase family.</text>
</comment>
<comment type="sequence caution" evidence="2">
    <conflict type="erroneous initiation">
        <sequence resource="EMBL-CDS" id="AAP17058"/>
    </conflict>
    <text>Extended N-terminus.</text>
</comment>
<reference key="1">
    <citation type="journal article" date="2002" name="Nucleic Acids Res.">
        <title>Genome sequence of Shigella flexneri 2a: insights into pathogenicity through comparison with genomes of Escherichia coli K12 and O157.</title>
        <authorList>
            <person name="Jin Q."/>
            <person name="Yuan Z."/>
            <person name="Xu J."/>
            <person name="Wang Y."/>
            <person name="Shen Y."/>
            <person name="Lu W."/>
            <person name="Wang J."/>
            <person name="Liu H."/>
            <person name="Yang J."/>
            <person name="Yang F."/>
            <person name="Zhang X."/>
            <person name="Zhang J."/>
            <person name="Yang G."/>
            <person name="Wu H."/>
            <person name="Qu D."/>
            <person name="Dong J."/>
            <person name="Sun L."/>
            <person name="Xue Y."/>
            <person name="Zhao A."/>
            <person name="Gao Y."/>
            <person name="Zhu J."/>
            <person name="Kan B."/>
            <person name="Ding K."/>
            <person name="Chen S."/>
            <person name="Cheng H."/>
            <person name="Yao Z."/>
            <person name="He B."/>
            <person name="Chen R."/>
            <person name="Ma D."/>
            <person name="Qiang B."/>
            <person name="Wen Y."/>
            <person name="Hou Y."/>
            <person name="Yu J."/>
        </authorList>
    </citation>
    <scope>NUCLEOTIDE SEQUENCE [LARGE SCALE GENOMIC DNA]</scope>
    <source>
        <strain>301 / Serotype 2a</strain>
    </source>
</reference>
<reference key="2">
    <citation type="journal article" date="2003" name="Infect. Immun.">
        <title>Complete genome sequence and comparative genomics of Shigella flexneri serotype 2a strain 2457T.</title>
        <authorList>
            <person name="Wei J."/>
            <person name="Goldberg M.B."/>
            <person name="Burland V."/>
            <person name="Venkatesan M.M."/>
            <person name="Deng W."/>
            <person name="Fournier G."/>
            <person name="Mayhew G.F."/>
            <person name="Plunkett G. III"/>
            <person name="Rose D.J."/>
            <person name="Darling A."/>
            <person name="Mau B."/>
            <person name="Perna N.T."/>
            <person name="Payne S.M."/>
            <person name="Runyen-Janecky L.J."/>
            <person name="Zhou S."/>
            <person name="Schwartz D.C."/>
            <person name="Blattner F.R."/>
        </authorList>
    </citation>
    <scope>NUCLEOTIDE SEQUENCE [LARGE SCALE GENOMIC DNA]</scope>
    <source>
        <strain>ATCC 700930 / 2457T / Serotype 2a</strain>
    </source>
</reference>
<sequence>MQSRLSWIFNPKTGKTVMLAFDHGYFQGPTIGLERIDINIAPLFEHADVLMCTRGILRSVVPPATNKPVVLRASGANSILAELSNEAVALSMDDAVRLNSCAVAAQVYIGSEYEHQSIKNIIQLVDAGMKVGMPTMAVTGVGKDMVRDQRYFSLATRIAAEMGAQIIKTYYVEKGFERIVAGCPVPIVIAGGKKLPERETLEMCWQAIDQGASGVDMGRNIFQSDHPVAMMKAVQAVVHHNETADRAYELYLSEKQ</sequence>
<name>LSRF_SHIFL</name>
<keyword id="KW-0963">Cytoplasm</keyword>
<keyword id="KW-1185">Reference proteome</keyword>
<keyword id="KW-0704">Schiff base</keyword>
<keyword id="KW-0808">Transferase</keyword>
<evidence type="ECO:0000250" key="1">
    <source>
        <dbReference type="UniProtKB" id="P76143"/>
    </source>
</evidence>
<evidence type="ECO:0000305" key="2"/>
<gene>
    <name type="primary">lsrF</name>
    <name type="ordered locus">SF1578</name>
    <name type="ordered locus">S1704</name>
</gene>
<feature type="chain" id="PRO_0000351531" description="3-hydroxy-5-phosphonooxypentane-2,4-dione thiolase">
    <location>
        <begin position="1"/>
        <end position="256"/>
    </location>
</feature>
<feature type="active site" description="Schiff-base intermediate with substrate" evidence="1">
    <location>
        <position position="168"/>
    </location>
</feature>
<dbReference type="EC" id="2.3.1.245" evidence="1"/>
<dbReference type="EMBL" id="AE005674">
    <property type="protein sequence ID" value="AAN43166.1"/>
    <property type="molecule type" value="Genomic_DNA"/>
</dbReference>
<dbReference type="EMBL" id="AE014073">
    <property type="protein sequence ID" value="AAP17058.1"/>
    <property type="status" value="ALT_INIT"/>
    <property type="molecule type" value="Genomic_DNA"/>
</dbReference>
<dbReference type="RefSeq" id="NP_707459.1">
    <property type="nucleotide sequence ID" value="NC_004337.2"/>
</dbReference>
<dbReference type="RefSeq" id="WP_001191842.1">
    <property type="nucleotide sequence ID" value="NZ_WPGW01000239.1"/>
</dbReference>
<dbReference type="SMR" id="Q83L15"/>
<dbReference type="STRING" id="198214.SF1578"/>
<dbReference type="PaxDb" id="198214-SF1578"/>
<dbReference type="GeneID" id="1023374"/>
<dbReference type="KEGG" id="sfl:SF1578"/>
<dbReference type="KEGG" id="sfx:S1704"/>
<dbReference type="PATRIC" id="fig|198214.7.peg.1867"/>
<dbReference type="HOGENOM" id="CLU_057069_1_0_6"/>
<dbReference type="Proteomes" id="UP000001006">
    <property type="component" value="Chromosome"/>
</dbReference>
<dbReference type="Proteomes" id="UP000002673">
    <property type="component" value="Chromosome"/>
</dbReference>
<dbReference type="GO" id="GO:0005737">
    <property type="term" value="C:cytoplasm"/>
    <property type="evidence" value="ECO:0007669"/>
    <property type="project" value="UniProtKB-SubCell"/>
</dbReference>
<dbReference type="GO" id="GO:0004332">
    <property type="term" value="F:fructose-bisphosphate aldolase activity"/>
    <property type="evidence" value="ECO:0007669"/>
    <property type="project" value="InterPro"/>
</dbReference>
<dbReference type="GO" id="GO:0016740">
    <property type="term" value="F:transferase activity"/>
    <property type="evidence" value="ECO:0007669"/>
    <property type="project" value="UniProtKB-KW"/>
</dbReference>
<dbReference type="CDD" id="cd00958">
    <property type="entry name" value="DhnA"/>
    <property type="match status" value="1"/>
</dbReference>
<dbReference type="Gene3D" id="3.20.20.70">
    <property type="entry name" value="Aldolase class I"/>
    <property type="match status" value="1"/>
</dbReference>
<dbReference type="InterPro" id="IPR013785">
    <property type="entry name" value="Aldolase_TIM"/>
</dbReference>
<dbReference type="InterPro" id="IPR002915">
    <property type="entry name" value="DeoC/FbaB/LacD_aldolase"/>
</dbReference>
<dbReference type="InterPro" id="IPR050456">
    <property type="entry name" value="DeoC/FbaB_aldolase"/>
</dbReference>
<dbReference type="InterPro" id="IPR041720">
    <property type="entry name" value="FbaB-like"/>
</dbReference>
<dbReference type="NCBIfam" id="NF006081">
    <property type="entry name" value="PRK08227.1"/>
    <property type="match status" value="1"/>
</dbReference>
<dbReference type="PANTHER" id="PTHR47916:SF1">
    <property type="entry name" value="3-HYDROXY-5-PHOSPHONOOXYPENTANE-2,4-DIONE THIOLASE"/>
    <property type="match status" value="1"/>
</dbReference>
<dbReference type="PANTHER" id="PTHR47916">
    <property type="entry name" value="FRUCTOSE-BISPHOSPHATE ALDOLASE CLASS 1"/>
    <property type="match status" value="1"/>
</dbReference>
<dbReference type="Pfam" id="PF01791">
    <property type="entry name" value="DeoC"/>
    <property type="match status" value="1"/>
</dbReference>
<dbReference type="PIRSF" id="PIRSF038992">
    <property type="entry name" value="Aldolase_Ia"/>
    <property type="match status" value="1"/>
</dbReference>
<dbReference type="SMART" id="SM01133">
    <property type="entry name" value="DeoC"/>
    <property type="match status" value="1"/>
</dbReference>
<dbReference type="SUPFAM" id="SSF51569">
    <property type="entry name" value="Aldolase"/>
    <property type="match status" value="1"/>
</dbReference>